<sequence>MLKIFNTLTRQKEEFKPIHAGEVGMYVCGITVYDLCHIGHGRTFVAFDVVARYLRFLGYKLKYVRNITDIDDKIIKRANENGESFVALVDRMIAEMHQDFDALNILRPDSEPRATHHIQEIIELTRTLIEKGHAYVADNGDVMFDVPTDPTYGQLSRQDLEQLQAGARVDVVDVKRNPMDFVLWKMSKEGEPSWPSPWGEGRPGWHIECSAMNCKQLGNHFDIHGGGSDLMFPHHENEIAQSTCAHDGEYVNYWMHSGMVMVDREKMSKSLGNFFTVRDVLKYYDAETVRYFLMSGHYRSQLNYSEENLKQARASLERLYTALRGTDKSAAPAGGEAFEARFVEAMNDDFNTPEAYSVLFDMAREVNRLKGEDMTAANAMASHLRKISGVLGLLEQEPDVFLQSGAQADDGEVAEIEALIQQRLDARKAKDWAAADAARDRLTEMGIILEDGPQGTTWRRK</sequence>
<comment type="catalytic activity">
    <reaction evidence="1">
        <text>tRNA(Cys) + L-cysteine + ATP = L-cysteinyl-tRNA(Cys) + AMP + diphosphate</text>
        <dbReference type="Rhea" id="RHEA:17773"/>
        <dbReference type="Rhea" id="RHEA-COMP:9661"/>
        <dbReference type="Rhea" id="RHEA-COMP:9679"/>
        <dbReference type="ChEBI" id="CHEBI:30616"/>
        <dbReference type="ChEBI" id="CHEBI:33019"/>
        <dbReference type="ChEBI" id="CHEBI:35235"/>
        <dbReference type="ChEBI" id="CHEBI:78442"/>
        <dbReference type="ChEBI" id="CHEBI:78517"/>
        <dbReference type="ChEBI" id="CHEBI:456215"/>
        <dbReference type="EC" id="6.1.1.16"/>
    </reaction>
</comment>
<comment type="cofactor">
    <cofactor evidence="1">
        <name>Zn(2+)</name>
        <dbReference type="ChEBI" id="CHEBI:29105"/>
    </cofactor>
    <text evidence="1">Binds 1 zinc ion per subunit.</text>
</comment>
<comment type="subunit">
    <text evidence="1">Monomer.</text>
</comment>
<comment type="subcellular location">
    <subcellularLocation>
        <location evidence="1">Cytoplasm</location>
    </subcellularLocation>
</comment>
<comment type="similarity">
    <text evidence="1">Belongs to the class-I aminoacyl-tRNA synthetase family.</text>
</comment>
<reference key="1">
    <citation type="journal article" date="2011" name="J. Bacteriol.">
        <title>Comparative genomics of 28 Salmonella enterica isolates: evidence for CRISPR-mediated adaptive sublineage evolution.</title>
        <authorList>
            <person name="Fricke W.F."/>
            <person name="Mammel M.K."/>
            <person name="McDermott P.F."/>
            <person name="Tartera C."/>
            <person name="White D.G."/>
            <person name="Leclerc J.E."/>
            <person name="Ravel J."/>
            <person name="Cebula T.A."/>
        </authorList>
    </citation>
    <scope>NUCLEOTIDE SEQUENCE [LARGE SCALE GENOMIC DNA]</scope>
    <source>
        <strain>CT_02021853</strain>
    </source>
</reference>
<organism>
    <name type="scientific">Salmonella dublin (strain CT_02021853)</name>
    <dbReference type="NCBI Taxonomy" id="439851"/>
    <lineage>
        <taxon>Bacteria</taxon>
        <taxon>Pseudomonadati</taxon>
        <taxon>Pseudomonadota</taxon>
        <taxon>Gammaproteobacteria</taxon>
        <taxon>Enterobacterales</taxon>
        <taxon>Enterobacteriaceae</taxon>
        <taxon>Salmonella</taxon>
    </lineage>
</organism>
<protein>
    <recommendedName>
        <fullName evidence="1">Cysteine--tRNA ligase</fullName>
        <ecNumber evidence="1">6.1.1.16</ecNumber>
    </recommendedName>
    <alternativeName>
        <fullName evidence="1">Cysteinyl-tRNA synthetase</fullName>
        <shortName evidence="1">CysRS</shortName>
    </alternativeName>
</protein>
<keyword id="KW-0030">Aminoacyl-tRNA synthetase</keyword>
<keyword id="KW-0067">ATP-binding</keyword>
<keyword id="KW-0963">Cytoplasm</keyword>
<keyword id="KW-0436">Ligase</keyword>
<keyword id="KW-0479">Metal-binding</keyword>
<keyword id="KW-0547">Nucleotide-binding</keyword>
<keyword id="KW-0648">Protein biosynthesis</keyword>
<keyword id="KW-0862">Zinc</keyword>
<proteinExistence type="inferred from homology"/>
<dbReference type="EC" id="6.1.1.16" evidence="1"/>
<dbReference type="EMBL" id="CP001144">
    <property type="protein sequence ID" value="ACH73760.1"/>
    <property type="molecule type" value="Genomic_DNA"/>
</dbReference>
<dbReference type="RefSeq" id="WP_000912377.1">
    <property type="nucleotide sequence ID" value="NC_011205.1"/>
</dbReference>
<dbReference type="SMR" id="B5FLP7"/>
<dbReference type="KEGG" id="sed:SeD_A0585"/>
<dbReference type="HOGENOM" id="CLU_013528_0_1_6"/>
<dbReference type="Proteomes" id="UP000008322">
    <property type="component" value="Chromosome"/>
</dbReference>
<dbReference type="GO" id="GO:0005829">
    <property type="term" value="C:cytosol"/>
    <property type="evidence" value="ECO:0007669"/>
    <property type="project" value="TreeGrafter"/>
</dbReference>
<dbReference type="GO" id="GO:0005524">
    <property type="term" value="F:ATP binding"/>
    <property type="evidence" value="ECO:0007669"/>
    <property type="project" value="UniProtKB-UniRule"/>
</dbReference>
<dbReference type="GO" id="GO:0004817">
    <property type="term" value="F:cysteine-tRNA ligase activity"/>
    <property type="evidence" value="ECO:0007669"/>
    <property type="project" value="UniProtKB-UniRule"/>
</dbReference>
<dbReference type="GO" id="GO:0008270">
    <property type="term" value="F:zinc ion binding"/>
    <property type="evidence" value="ECO:0007669"/>
    <property type="project" value="UniProtKB-UniRule"/>
</dbReference>
<dbReference type="GO" id="GO:0006423">
    <property type="term" value="P:cysteinyl-tRNA aminoacylation"/>
    <property type="evidence" value="ECO:0007669"/>
    <property type="project" value="UniProtKB-UniRule"/>
</dbReference>
<dbReference type="CDD" id="cd07963">
    <property type="entry name" value="Anticodon_Ia_Cys"/>
    <property type="match status" value="1"/>
</dbReference>
<dbReference type="CDD" id="cd00672">
    <property type="entry name" value="CysRS_core"/>
    <property type="match status" value="1"/>
</dbReference>
<dbReference type="FunFam" id="1.20.120.1910:FF:000001">
    <property type="entry name" value="Cysteine--tRNA ligase"/>
    <property type="match status" value="1"/>
</dbReference>
<dbReference type="FunFam" id="3.40.50.620:FF:000009">
    <property type="entry name" value="Cysteine--tRNA ligase"/>
    <property type="match status" value="1"/>
</dbReference>
<dbReference type="Gene3D" id="1.20.120.1910">
    <property type="entry name" value="Cysteine-tRNA ligase, C-terminal anti-codon recognition domain"/>
    <property type="match status" value="1"/>
</dbReference>
<dbReference type="Gene3D" id="3.40.50.620">
    <property type="entry name" value="HUPs"/>
    <property type="match status" value="1"/>
</dbReference>
<dbReference type="HAMAP" id="MF_00041">
    <property type="entry name" value="Cys_tRNA_synth"/>
    <property type="match status" value="1"/>
</dbReference>
<dbReference type="InterPro" id="IPR015803">
    <property type="entry name" value="Cys-tRNA-ligase"/>
</dbReference>
<dbReference type="InterPro" id="IPR015273">
    <property type="entry name" value="Cys-tRNA-synt_Ia_DALR"/>
</dbReference>
<dbReference type="InterPro" id="IPR024909">
    <property type="entry name" value="Cys-tRNA/MSH_ligase"/>
</dbReference>
<dbReference type="InterPro" id="IPR056411">
    <property type="entry name" value="CysS_C"/>
</dbReference>
<dbReference type="InterPro" id="IPR014729">
    <property type="entry name" value="Rossmann-like_a/b/a_fold"/>
</dbReference>
<dbReference type="InterPro" id="IPR032678">
    <property type="entry name" value="tRNA-synt_1_cat_dom"/>
</dbReference>
<dbReference type="InterPro" id="IPR009080">
    <property type="entry name" value="tRNAsynth_Ia_anticodon-bd"/>
</dbReference>
<dbReference type="NCBIfam" id="TIGR00435">
    <property type="entry name" value="cysS"/>
    <property type="match status" value="1"/>
</dbReference>
<dbReference type="PANTHER" id="PTHR10890:SF3">
    <property type="entry name" value="CYSTEINE--TRNA LIGASE, CYTOPLASMIC"/>
    <property type="match status" value="1"/>
</dbReference>
<dbReference type="PANTHER" id="PTHR10890">
    <property type="entry name" value="CYSTEINYL-TRNA SYNTHETASE"/>
    <property type="match status" value="1"/>
</dbReference>
<dbReference type="Pfam" id="PF23493">
    <property type="entry name" value="CysS_C"/>
    <property type="match status" value="1"/>
</dbReference>
<dbReference type="Pfam" id="PF09190">
    <property type="entry name" value="DALR_2"/>
    <property type="match status" value="1"/>
</dbReference>
<dbReference type="Pfam" id="PF01406">
    <property type="entry name" value="tRNA-synt_1e"/>
    <property type="match status" value="1"/>
</dbReference>
<dbReference type="PRINTS" id="PR00983">
    <property type="entry name" value="TRNASYNTHCYS"/>
</dbReference>
<dbReference type="SMART" id="SM00840">
    <property type="entry name" value="DALR_2"/>
    <property type="match status" value="1"/>
</dbReference>
<dbReference type="SUPFAM" id="SSF47323">
    <property type="entry name" value="Anticodon-binding domain of a subclass of class I aminoacyl-tRNA synthetases"/>
    <property type="match status" value="1"/>
</dbReference>
<dbReference type="SUPFAM" id="SSF52374">
    <property type="entry name" value="Nucleotidylyl transferase"/>
    <property type="match status" value="1"/>
</dbReference>
<feature type="chain" id="PRO_1000090866" description="Cysteine--tRNA ligase">
    <location>
        <begin position="1"/>
        <end position="461"/>
    </location>
</feature>
<feature type="short sequence motif" description="'HIGH' region">
    <location>
        <begin position="30"/>
        <end position="40"/>
    </location>
</feature>
<feature type="short sequence motif" description="'KMSKS' region">
    <location>
        <begin position="266"/>
        <end position="270"/>
    </location>
</feature>
<feature type="binding site" evidence="1">
    <location>
        <position position="28"/>
    </location>
    <ligand>
        <name>Zn(2+)</name>
        <dbReference type="ChEBI" id="CHEBI:29105"/>
    </ligand>
</feature>
<feature type="binding site" evidence="1">
    <location>
        <position position="209"/>
    </location>
    <ligand>
        <name>Zn(2+)</name>
        <dbReference type="ChEBI" id="CHEBI:29105"/>
    </ligand>
</feature>
<feature type="binding site" evidence="1">
    <location>
        <position position="234"/>
    </location>
    <ligand>
        <name>Zn(2+)</name>
        <dbReference type="ChEBI" id="CHEBI:29105"/>
    </ligand>
</feature>
<feature type="binding site" evidence="1">
    <location>
        <position position="238"/>
    </location>
    <ligand>
        <name>Zn(2+)</name>
        <dbReference type="ChEBI" id="CHEBI:29105"/>
    </ligand>
</feature>
<feature type="binding site" evidence="1">
    <location>
        <position position="269"/>
    </location>
    <ligand>
        <name>ATP</name>
        <dbReference type="ChEBI" id="CHEBI:30616"/>
    </ligand>
</feature>
<accession>B5FLP7</accession>
<name>SYC_SALDC</name>
<gene>
    <name evidence="1" type="primary">cysS</name>
    <name type="ordered locus">SeD_A0585</name>
</gene>
<evidence type="ECO:0000255" key="1">
    <source>
        <dbReference type="HAMAP-Rule" id="MF_00041"/>
    </source>
</evidence>